<evidence type="ECO:0000255" key="1"/>
<evidence type="ECO:0000256" key="2">
    <source>
        <dbReference type="SAM" id="MobiDB-lite"/>
    </source>
</evidence>
<evidence type="ECO:0000269" key="3">
    <source>
    </source>
</evidence>
<evidence type="ECO:0000303" key="4">
    <source>
    </source>
</evidence>
<evidence type="ECO:0000305" key="5"/>
<evidence type="ECO:0000312" key="6">
    <source>
        <dbReference type="MGI" id="MGI:1861452"/>
    </source>
</evidence>
<feature type="chain" id="PRO_0000058439" description="GPI ethanolamine phosphate transferase 3, catalytic subunit">
    <location>
        <begin position="1"/>
        <end position="1093"/>
    </location>
</feature>
<feature type="transmembrane region" description="Helical" evidence="1">
    <location>
        <begin position="4"/>
        <end position="24"/>
    </location>
</feature>
<feature type="transmembrane region" description="Helical" evidence="1">
    <location>
        <begin position="460"/>
        <end position="480"/>
    </location>
</feature>
<feature type="transmembrane region" description="Helical" evidence="1">
    <location>
        <begin position="483"/>
        <end position="503"/>
    </location>
</feature>
<feature type="transmembrane region" description="Helical" evidence="1">
    <location>
        <begin position="512"/>
        <end position="532"/>
    </location>
</feature>
<feature type="transmembrane region" description="Helical" evidence="1">
    <location>
        <begin position="669"/>
        <end position="689"/>
    </location>
</feature>
<feature type="transmembrane region" description="Helical" evidence="1">
    <location>
        <begin position="702"/>
        <end position="722"/>
    </location>
</feature>
<feature type="transmembrane region" description="Helical" evidence="1">
    <location>
        <begin position="748"/>
        <end position="768"/>
    </location>
</feature>
<feature type="transmembrane region" description="Helical" evidence="1">
    <location>
        <begin position="831"/>
        <end position="851"/>
    </location>
</feature>
<feature type="transmembrane region" description="Helical" evidence="1">
    <location>
        <begin position="856"/>
        <end position="876"/>
    </location>
</feature>
<feature type="transmembrane region" description="Helical" evidence="1">
    <location>
        <begin position="945"/>
        <end position="965"/>
    </location>
</feature>
<feature type="transmembrane region" description="Helical" evidence="1">
    <location>
        <begin position="1018"/>
        <end position="1038"/>
    </location>
</feature>
<feature type="transmembrane region" description="Helical" evidence="1">
    <location>
        <begin position="1052"/>
        <end position="1072"/>
    </location>
</feature>
<feature type="region of interest" description="Disordered" evidence="2">
    <location>
        <begin position="971"/>
        <end position="991"/>
    </location>
</feature>
<feature type="glycosylation site" description="N-linked (GlcNAc...) asparagine" evidence="1">
    <location>
        <position position="268"/>
    </location>
</feature>
<feature type="sequence conflict" description="In Ref. 2; BAB29052." evidence="5" ref="2">
    <original>V</original>
    <variation>M</variation>
    <location>
        <position position="1000"/>
    </location>
</feature>
<name>PIGO_MOUSE</name>
<comment type="function">
    <text evidence="3">Catalytic subunit of the ethanolamine phosphate transferase 3 complex that transfers an ethanolamine phosphate (EtNP) from a phosphatidylethanolamine (PE) to the 6-OH position of the third alpha-1,2-linked mannose of the an alpha-D-Man-(1-&gt;2)-alpha-D-Man-(1-&gt;6)-2-PEtn-alpha-D-Man-(1-&gt;4)-alpha-D-GlcN-(1-&gt;6)-(1-radyl,2-acyl-sn-glycero-3-phospho)-2-acyl-inositol (also termed H6) intermediate to generate a 6-PEtn-alpha-D-Man-(1-&gt;2)-alpha-D-Man-(1-&gt;6)-2-PEtn-alpha-D-Man-(1-&gt;4)-alpha-D-GlcN-(1-&gt;6)-(1-radyl,2-acyl-sn-glycero-3-phospho)-2-acyl-inositol (also termed H7) and participates in the tenth step of the glycosylphosphatidylinositol-anchor biosynthesis.</text>
</comment>
<comment type="pathway">
    <text evidence="3">Glycolipid biosynthesis; glycosylphosphatidylinositol-anchor biosynthesis.</text>
</comment>
<comment type="subunit">
    <text evidence="3">Forms the ethanolamine phosphate transferase 3 complex composed by PIGO and PIGF (PubMed:10781593). PIGF is required to stabilize PIGO (PubMed:10781593).</text>
</comment>
<comment type="subcellular location">
    <subcellularLocation>
        <location evidence="3">Endoplasmic reticulum membrane</location>
        <topology evidence="1">Multi-pass membrane protein</topology>
    </subcellularLocation>
</comment>
<comment type="similarity">
    <text evidence="5">Belongs to the PIGG/PIGN/PIGO family. PIGO subfamily.</text>
</comment>
<comment type="sequence caution" evidence="5">
    <conflict type="erroneous initiation">
        <sequence resource="EMBL-CDS" id="BAA96254"/>
    </conflict>
    <text>Extended N-terminus.</text>
</comment>
<proteinExistence type="evidence at protein level"/>
<gene>
    <name evidence="6" type="primary">Pigo</name>
</gene>
<dbReference type="EC" id="2.-.-.-" evidence="3"/>
<dbReference type="EMBL" id="AB038560">
    <property type="protein sequence ID" value="BAA96254.1"/>
    <property type="status" value="ALT_INIT"/>
    <property type="molecule type" value="mRNA"/>
</dbReference>
<dbReference type="EMBL" id="AK013913">
    <property type="protein sequence ID" value="BAB29052.1"/>
    <property type="molecule type" value="mRNA"/>
</dbReference>
<dbReference type="CCDS" id="CCDS18088.1"/>
<dbReference type="SMR" id="Q9JJI6"/>
<dbReference type="FunCoup" id="Q9JJI6">
    <property type="interactions" value="1726"/>
</dbReference>
<dbReference type="STRING" id="10090.ENSMUSP00000095713"/>
<dbReference type="GlyCosmos" id="Q9JJI6">
    <property type="glycosylation" value="1 site, No reported glycans"/>
</dbReference>
<dbReference type="GlyGen" id="Q9JJI6">
    <property type="glycosylation" value="3 sites, 1 N-linked glycan (1 site)"/>
</dbReference>
<dbReference type="PhosphoSitePlus" id="Q9JJI6"/>
<dbReference type="PaxDb" id="10090-ENSMUSP00000095713"/>
<dbReference type="ProteomicsDB" id="287723"/>
<dbReference type="AGR" id="MGI:1861452"/>
<dbReference type="MGI" id="MGI:1861452">
    <property type="gene designation" value="Pigo"/>
</dbReference>
<dbReference type="eggNOG" id="KOG2126">
    <property type="taxonomic scope" value="Eukaryota"/>
</dbReference>
<dbReference type="InParanoid" id="Q9JJI6"/>
<dbReference type="UniPathway" id="UPA00196"/>
<dbReference type="ChiTaRS" id="Pigo">
    <property type="organism name" value="mouse"/>
</dbReference>
<dbReference type="PRO" id="PR:Q9JJI6"/>
<dbReference type="Proteomes" id="UP000000589">
    <property type="component" value="Unplaced"/>
</dbReference>
<dbReference type="RNAct" id="Q9JJI6">
    <property type="molecule type" value="protein"/>
</dbReference>
<dbReference type="GO" id="GO:0005789">
    <property type="term" value="C:endoplasmic reticulum membrane"/>
    <property type="evidence" value="ECO:0000314"/>
    <property type="project" value="UniProtKB"/>
</dbReference>
<dbReference type="GO" id="GO:0051377">
    <property type="term" value="F:mannose-ethanolamine phosphotransferase activity"/>
    <property type="evidence" value="ECO:0000315"/>
    <property type="project" value="UniProtKB"/>
</dbReference>
<dbReference type="GO" id="GO:0006506">
    <property type="term" value="P:GPI anchor biosynthetic process"/>
    <property type="evidence" value="ECO:0000314"/>
    <property type="project" value="UniProtKB"/>
</dbReference>
<dbReference type="CDD" id="cd16023">
    <property type="entry name" value="GPI_EPT_3"/>
    <property type="match status" value="1"/>
</dbReference>
<dbReference type="FunFam" id="3.40.720.10:FF:000041">
    <property type="entry name" value="GPI ethanolamine phosphate transferase 3"/>
    <property type="match status" value="1"/>
</dbReference>
<dbReference type="Gene3D" id="3.40.720.10">
    <property type="entry name" value="Alkaline Phosphatase, subunit A"/>
    <property type="match status" value="1"/>
</dbReference>
<dbReference type="InterPro" id="IPR017850">
    <property type="entry name" value="Alkaline_phosphatase_core_sf"/>
</dbReference>
<dbReference type="InterPro" id="IPR002591">
    <property type="entry name" value="Phosphodiest/P_Trfase"/>
</dbReference>
<dbReference type="InterPro" id="IPR037675">
    <property type="entry name" value="PIG-O_N"/>
</dbReference>
<dbReference type="InterPro" id="IPR039524">
    <property type="entry name" value="PIGO/GPI13"/>
</dbReference>
<dbReference type="PANTHER" id="PTHR23071:SF1">
    <property type="entry name" value="GPI ETHANOLAMINE PHOSPHATE TRANSFERASE 3"/>
    <property type="match status" value="1"/>
</dbReference>
<dbReference type="PANTHER" id="PTHR23071">
    <property type="entry name" value="PHOSPHATIDYLINOSITOL GLYCAN"/>
    <property type="match status" value="1"/>
</dbReference>
<dbReference type="Pfam" id="PF01663">
    <property type="entry name" value="Phosphodiest"/>
    <property type="match status" value="1"/>
</dbReference>
<dbReference type="SUPFAM" id="SSF53649">
    <property type="entry name" value="Alkaline phosphatase-like"/>
    <property type="match status" value="1"/>
</dbReference>
<protein>
    <recommendedName>
        <fullName>GPI ethanolamine phosphate transferase 3, catalytic subunit</fullName>
        <ecNumber evidence="3">2.-.-.-</ecNumber>
    </recommendedName>
    <alternativeName>
        <fullName>Phosphatidylinositol-glycan biosynthesis class O protein</fullName>
        <shortName evidence="4">PIG-O</shortName>
    </alternativeName>
</protein>
<keyword id="KW-0256">Endoplasmic reticulum</keyword>
<keyword id="KW-0325">Glycoprotein</keyword>
<keyword id="KW-0337">GPI-anchor biosynthesis</keyword>
<keyword id="KW-0472">Membrane</keyword>
<keyword id="KW-1185">Reference proteome</keyword>
<keyword id="KW-0808">Transferase</keyword>
<keyword id="KW-0812">Transmembrane</keyword>
<keyword id="KW-1133">Transmembrane helix</keyword>
<sequence length="1093" mass="119156">MRKVSVLLFLAWVCFLFYAGIALFTSGFLLTRLELTNQSSCQELPGPGPLPWGSHGKPGACWMPSRFSRVVLVLIDALRFDFAQPQRSHVPGEPPVSVPFLGKLGSLQRILESQPHHGRLYRSQVDPPTTTMQRLKALTTGSLPTFIDAGSNFASHAIVEDNVIQQLNSAGRRVVFMGDDTWRDLFPGAFSQAFFFSSFNVRDLHTVDNGILEHLYPTLDGGSWDVLIAHFLGVDHCGHKHGPHHPEMAKKLSQMDQVIQGLIERLENDTLLVVAGDHGMTMNGDHGGDSELEVSAALFLYSPTALFPSVPPEEPEVIPQVSLVPTLALLLGLPIPFGNTGEVMAELFSGGSDSSHPHSSALAQVSALHINAQQVSRFLHTYSAATQDLQVKELHRLQTLFSKASARYQHFLRDPQEAEAALSTLTAEFQQFLRGARALCIESWARFSLVRMAGGAALLAAACLLCLLASQLAVAPGFLFRPLLLIPVAWGLTWTILYAGVSVTTGSKIDLVVLGAVAAAGSLLPFLWKAWVSRGSKRPLAPLLPVPRPVLILLLIRLATFFSDSFFVVEARATPFLLGSLVFFLVAQLHWEGQLLPPKPLTMSRLGSSAPTAPPRHSGAHALWLGIGLLLFTRLAGLFHRCPEETPACRSSPWLSPLASMVGGRAKNLWYGACVGALVALLVVVRLWLRRYGNLKSPEPPVLFVRWGMPLMVLGTAAYWALASGAEEAPPRLRALVAGASAVLPRAVMGLAALGLVLLLWRPVTVLVKAGAATSRTRTILTPFSGPPTSQADLDYVVPQIYRHMQEEFQGRLERTKAQGPITVAAYQLGSVYSAAMVTALLLLAFPLMLLHVERVSLVFLLLFLQSFLLLHLLAAGTPVATPGPFTVLWQAVSAWVLLATQTFYSTGHQPVFSAIHWHAAFVGFPDGHGSSTWLPALLVGANTFASHLLFAVGCPLLLLWPFLCERQGPKRRQPLPGSESEARVRPEEEEELQEPLMEVRLRDAPNHFNAALLQLGLKYLFILGAQILACALAASILRRHLMVWKVFAPKFIFEAVGFIVSSVGLLLGIALVMRVDVAVSSWFKKLVLAQQR</sequence>
<accession>Q9JJI6</accession>
<accession>Q9CRY2</accession>
<organism>
    <name type="scientific">Mus musculus</name>
    <name type="common">Mouse</name>
    <dbReference type="NCBI Taxonomy" id="10090"/>
    <lineage>
        <taxon>Eukaryota</taxon>
        <taxon>Metazoa</taxon>
        <taxon>Chordata</taxon>
        <taxon>Craniata</taxon>
        <taxon>Vertebrata</taxon>
        <taxon>Euteleostomi</taxon>
        <taxon>Mammalia</taxon>
        <taxon>Eutheria</taxon>
        <taxon>Euarchontoglires</taxon>
        <taxon>Glires</taxon>
        <taxon>Rodentia</taxon>
        <taxon>Myomorpha</taxon>
        <taxon>Muroidea</taxon>
        <taxon>Muridae</taxon>
        <taxon>Murinae</taxon>
        <taxon>Mus</taxon>
        <taxon>Mus</taxon>
    </lineage>
</organism>
<reference key="1">
    <citation type="journal article" date="2000" name="J. Biol. Chem.">
        <title>Requirement of PIG-F and PIG-O for transferring phosphoethanolamine to the third mannose in glycosylphosphatidylinositol.</title>
        <authorList>
            <person name="Hong Y."/>
            <person name="Maeda Y."/>
            <person name="Watanabe R."/>
            <person name="Inoue N."/>
            <person name="Ohishi K."/>
            <person name="Kinoshita T."/>
        </authorList>
    </citation>
    <scope>NUCLEOTIDE SEQUENCE [MRNA]</scope>
    <scope>FUNCTION</scope>
    <scope>CATALYTIC ACTIVITY</scope>
    <scope>PATHWAY</scope>
    <scope>SUBUNIT</scope>
    <scope>SUBCELLULAR LOCATION</scope>
    <source>
        <tissue>Testis</tissue>
    </source>
</reference>
<reference key="2">
    <citation type="journal article" date="2005" name="Science">
        <title>The transcriptional landscape of the mammalian genome.</title>
        <authorList>
            <person name="Carninci P."/>
            <person name="Kasukawa T."/>
            <person name="Katayama S."/>
            <person name="Gough J."/>
            <person name="Frith M.C."/>
            <person name="Maeda N."/>
            <person name="Oyama R."/>
            <person name="Ravasi T."/>
            <person name="Lenhard B."/>
            <person name="Wells C."/>
            <person name="Kodzius R."/>
            <person name="Shimokawa K."/>
            <person name="Bajic V.B."/>
            <person name="Brenner S.E."/>
            <person name="Batalov S."/>
            <person name="Forrest A.R."/>
            <person name="Zavolan M."/>
            <person name="Davis M.J."/>
            <person name="Wilming L.G."/>
            <person name="Aidinis V."/>
            <person name="Allen J.E."/>
            <person name="Ambesi-Impiombato A."/>
            <person name="Apweiler R."/>
            <person name="Aturaliya R.N."/>
            <person name="Bailey T.L."/>
            <person name="Bansal M."/>
            <person name="Baxter L."/>
            <person name="Beisel K.W."/>
            <person name="Bersano T."/>
            <person name="Bono H."/>
            <person name="Chalk A.M."/>
            <person name="Chiu K.P."/>
            <person name="Choudhary V."/>
            <person name="Christoffels A."/>
            <person name="Clutterbuck D.R."/>
            <person name="Crowe M.L."/>
            <person name="Dalla E."/>
            <person name="Dalrymple B.P."/>
            <person name="de Bono B."/>
            <person name="Della Gatta G."/>
            <person name="di Bernardo D."/>
            <person name="Down T."/>
            <person name="Engstrom P."/>
            <person name="Fagiolini M."/>
            <person name="Faulkner G."/>
            <person name="Fletcher C.F."/>
            <person name="Fukushima T."/>
            <person name="Furuno M."/>
            <person name="Futaki S."/>
            <person name="Gariboldi M."/>
            <person name="Georgii-Hemming P."/>
            <person name="Gingeras T.R."/>
            <person name="Gojobori T."/>
            <person name="Green R.E."/>
            <person name="Gustincich S."/>
            <person name="Harbers M."/>
            <person name="Hayashi Y."/>
            <person name="Hensch T.K."/>
            <person name="Hirokawa N."/>
            <person name="Hill D."/>
            <person name="Huminiecki L."/>
            <person name="Iacono M."/>
            <person name="Ikeo K."/>
            <person name="Iwama A."/>
            <person name="Ishikawa T."/>
            <person name="Jakt M."/>
            <person name="Kanapin A."/>
            <person name="Katoh M."/>
            <person name="Kawasawa Y."/>
            <person name="Kelso J."/>
            <person name="Kitamura H."/>
            <person name="Kitano H."/>
            <person name="Kollias G."/>
            <person name="Krishnan S.P."/>
            <person name="Kruger A."/>
            <person name="Kummerfeld S.K."/>
            <person name="Kurochkin I.V."/>
            <person name="Lareau L.F."/>
            <person name="Lazarevic D."/>
            <person name="Lipovich L."/>
            <person name="Liu J."/>
            <person name="Liuni S."/>
            <person name="McWilliam S."/>
            <person name="Madan Babu M."/>
            <person name="Madera M."/>
            <person name="Marchionni L."/>
            <person name="Matsuda H."/>
            <person name="Matsuzawa S."/>
            <person name="Miki H."/>
            <person name="Mignone F."/>
            <person name="Miyake S."/>
            <person name="Morris K."/>
            <person name="Mottagui-Tabar S."/>
            <person name="Mulder N."/>
            <person name="Nakano N."/>
            <person name="Nakauchi H."/>
            <person name="Ng P."/>
            <person name="Nilsson R."/>
            <person name="Nishiguchi S."/>
            <person name="Nishikawa S."/>
            <person name="Nori F."/>
            <person name="Ohara O."/>
            <person name="Okazaki Y."/>
            <person name="Orlando V."/>
            <person name="Pang K.C."/>
            <person name="Pavan W.J."/>
            <person name="Pavesi G."/>
            <person name="Pesole G."/>
            <person name="Petrovsky N."/>
            <person name="Piazza S."/>
            <person name="Reed J."/>
            <person name="Reid J.F."/>
            <person name="Ring B.Z."/>
            <person name="Ringwald M."/>
            <person name="Rost B."/>
            <person name="Ruan Y."/>
            <person name="Salzberg S.L."/>
            <person name="Sandelin A."/>
            <person name="Schneider C."/>
            <person name="Schoenbach C."/>
            <person name="Sekiguchi K."/>
            <person name="Semple C.A."/>
            <person name="Seno S."/>
            <person name="Sessa L."/>
            <person name="Sheng Y."/>
            <person name="Shibata Y."/>
            <person name="Shimada H."/>
            <person name="Shimada K."/>
            <person name="Silva D."/>
            <person name="Sinclair B."/>
            <person name="Sperling S."/>
            <person name="Stupka E."/>
            <person name="Sugiura K."/>
            <person name="Sultana R."/>
            <person name="Takenaka Y."/>
            <person name="Taki K."/>
            <person name="Tammoja K."/>
            <person name="Tan S.L."/>
            <person name="Tang S."/>
            <person name="Taylor M.S."/>
            <person name="Tegner J."/>
            <person name="Teichmann S.A."/>
            <person name="Ueda H.R."/>
            <person name="van Nimwegen E."/>
            <person name="Verardo R."/>
            <person name="Wei C.L."/>
            <person name="Yagi K."/>
            <person name="Yamanishi H."/>
            <person name="Zabarovsky E."/>
            <person name="Zhu S."/>
            <person name="Zimmer A."/>
            <person name="Hide W."/>
            <person name="Bult C."/>
            <person name="Grimmond S.M."/>
            <person name="Teasdale R.D."/>
            <person name="Liu E.T."/>
            <person name="Brusic V."/>
            <person name="Quackenbush J."/>
            <person name="Wahlestedt C."/>
            <person name="Mattick J.S."/>
            <person name="Hume D.A."/>
            <person name="Kai C."/>
            <person name="Sasaki D."/>
            <person name="Tomaru Y."/>
            <person name="Fukuda S."/>
            <person name="Kanamori-Katayama M."/>
            <person name="Suzuki M."/>
            <person name="Aoki J."/>
            <person name="Arakawa T."/>
            <person name="Iida J."/>
            <person name="Imamura K."/>
            <person name="Itoh M."/>
            <person name="Kato T."/>
            <person name="Kawaji H."/>
            <person name="Kawagashira N."/>
            <person name="Kawashima T."/>
            <person name="Kojima M."/>
            <person name="Kondo S."/>
            <person name="Konno H."/>
            <person name="Nakano K."/>
            <person name="Ninomiya N."/>
            <person name="Nishio T."/>
            <person name="Okada M."/>
            <person name="Plessy C."/>
            <person name="Shibata K."/>
            <person name="Shiraki T."/>
            <person name="Suzuki S."/>
            <person name="Tagami M."/>
            <person name="Waki K."/>
            <person name="Watahiki A."/>
            <person name="Okamura-Oho Y."/>
            <person name="Suzuki H."/>
            <person name="Kawai J."/>
            <person name="Hayashizaki Y."/>
        </authorList>
    </citation>
    <scope>NUCLEOTIDE SEQUENCE [LARGE SCALE MRNA] OF 923-1093</scope>
    <source>
        <strain>C57BL/6J</strain>
        <tissue>Embryonic head</tissue>
    </source>
</reference>